<accession>Q8GXL7</accession>
<accession>Q8LF08</accession>
<accession>Q94B66</accession>
<accession>Q9LU42</accession>
<evidence type="ECO:0000250" key="1"/>
<evidence type="ECO:0000255" key="2">
    <source>
        <dbReference type="PROSITE-ProRule" id="PRU00094"/>
    </source>
</evidence>
<evidence type="ECO:0000255" key="3">
    <source>
        <dbReference type="PROSITE-ProRule" id="PRU00357"/>
    </source>
</evidence>
<evidence type="ECO:0000255" key="4">
    <source>
        <dbReference type="PROSITE-ProRule" id="PRU00650"/>
    </source>
</evidence>
<evidence type="ECO:0000256" key="5">
    <source>
        <dbReference type="SAM" id="MobiDB-lite"/>
    </source>
</evidence>
<evidence type="ECO:0000269" key="6">
    <source>
    </source>
</evidence>
<evidence type="ECO:0000303" key="7">
    <source>
    </source>
</evidence>
<evidence type="ECO:0000305" key="8"/>
<organism>
    <name type="scientific">Arabidopsis thaliana</name>
    <name type="common">Mouse-ear cress</name>
    <dbReference type="NCBI Taxonomy" id="3702"/>
    <lineage>
        <taxon>Eukaryota</taxon>
        <taxon>Viridiplantae</taxon>
        <taxon>Streptophyta</taxon>
        <taxon>Embryophyta</taxon>
        <taxon>Tracheophyta</taxon>
        <taxon>Spermatophyta</taxon>
        <taxon>Magnoliopsida</taxon>
        <taxon>eudicotyledons</taxon>
        <taxon>Gunneridae</taxon>
        <taxon>Pentapetalae</taxon>
        <taxon>rosids</taxon>
        <taxon>malvids</taxon>
        <taxon>Brassicales</taxon>
        <taxon>Brassicaceae</taxon>
        <taxon>Camelineae</taxon>
        <taxon>Arabidopsis</taxon>
    </lineage>
</organism>
<gene>
    <name type="primary">GATA24</name>
    <name type="synonym">TIFY2B</name>
    <name type="synonym">ZML1</name>
    <name type="ordered locus">At3g21175</name>
    <name type="ORF">MXL8.2</name>
</gene>
<reference key="1">
    <citation type="journal article" date="2003" name="Biosci. Biotechnol. Biochem.">
        <title>Arabidopsis ZIM, a plant-specific GATA factor, can function as a transcriptional activator.</title>
        <authorList>
            <person name="Shikata M."/>
            <person name="Takemura M."/>
            <person name="Yokota A."/>
            <person name="Kohchi T."/>
        </authorList>
    </citation>
    <scope>NUCLEOTIDE SEQUENCE [MRNA] (ISOFORM 1)</scope>
</reference>
<reference key="2">
    <citation type="journal article" date="2000" name="DNA Res.">
        <title>Structural analysis of Arabidopsis thaliana chromosome 3. I. Sequence features of the regions of 4,504,864 bp covered by sixty P1 and TAC clones.</title>
        <authorList>
            <person name="Sato S."/>
            <person name="Nakamura Y."/>
            <person name="Kaneko T."/>
            <person name="Katoh T."/>
            <person name="Asamizu E."/>
            <person name="Tabata S."/>
        </authorList>
    </citation>
    <scope>NUCLEOTIDE SEQUENCE [LARGE SCALE GENOMIC DNA]</scope>
    <source>
        <strain>cv. Columbia</strain>
    </source>
</reference>
<reference key="3">
    <citation type="journal article" date="2017" name="Plant J.">
        <title>Araport11: a complete reannotation of the Arabidopsis thaliana reference genome.</title>
        <authorList>
            <person name="Cheng C.Y."/>
            <person name="Krishnakumar V."/>
            <person name="Chan A.P."/>
            <person name="Thibaud-Nissen F."/>
            <person name="Schobel S."/>
            <person name="Town C.D."/>
        </authorList>
    </citation>
    <scope>GENOME REANNOTATION</scope>
    <source>
        <strain>cv. Columbia</strain>
    </source>
</reference>
<reference key="4">
    <citation type="journal article" date="2003" name="Science">
        <title>Empirical analysis of transcriptional activity in the Arabidopsis genome.</title>
        <authorList>
            <person name="Yamada K."/>
            <person name="Lim J."/>
            <person name="Dale J.M."/>
            <person name="Chen H."/>
            <person name="Shinn P."/>
            <person name="Palm C.J."/>
            <person name="Southwick A.M."/>
            <person name="Wu H.C."/>
            <person name="Kim C.J."/>
            <person name="Nguyen M."/>
            <person name="Pham P.K."/>
            <person name="Cheuk R.F."/>
            <person name="Karlin-Newmann G."/>
            <person name="Liu S.X."/>
            <person name="Lam B."/>
            <person name="Sakano H."/>
            <person name="Wu T."/>
            <person name="Yu G."/>
            <person name="Miranda M."/>
            <person name="Quach H.L."/>
            <person name="Tripp M."/>
            <person name="Chang C.H."/>
            <person name="Lee J.M."/>
            <person name="Toriumi M.J."/>
            <person name="Chan M.M."/>
            <person name="Tang C.C."/>
            <person name="Onodera C.S."/>
            <person name="Deng J.M."/>
            <person name="Akiyama K."/>
            <person name="Ansari Y."/>
            <person name="Arakawa T."/>
            <person name="Banh J."/>
            <person name="Banno F."/>
            <person name="Bowser L."/>
            <person name="Brooks S.Y."/>
            <person name="Carninci P."/>
            <person name="Chao Q."/>
            <person name="Choy N."/>
            <person name="Enju A."/>
            <person name="Goldsmith A.D."/>
            <person name="Gurjal M."/>
            <person name="Hansen N.F."/>
            <person name="Hayashizaki Y."/>
            <person name="Johnson-Hopson C."/>
            <person name="Hsuan V.W."/>
            <person name="Iida K."/>
            <person name="Karnes M."/>
            <person name="Khan S."/>
            <person name="Koesema E."/>
            <person name="Ishida J."/>
            <person name="Jiang P.X."/>
            <person name="Jones T."/>
            <person name="Kawai J."/>
            <person name="Kamiya A."/>
            <person name="Meyers C."/>
            <person name="Nakajima M."/>
            <person name="Narusaka M."/>
            <person name="Seki M."/>
            <person name="Sakurai T."/>
            <person name="Satou M."/>
            <person name="Tamse R."/>
            <person name="Vaysberg M."/>
            <person name="Wallender E.K."/>
            <person name="Wong C."/>
            <person name="Yamamura Y."/>
            <person name="Yuan S."/>
            <person name="Shinozaki K."/>
            <person name="Davis R.W."/>
            <person name="Theologis A."/>
            <person name="Ecker J.R."/>
        </authorList>
    </citation>
    <scope>NUCLEOTIDE SEQUENCE [LARGE SCALE MRNA] (ISOFORM 2)</scope>
    <source>
        <strain>cv. Columbia</strain>
    </source>
</reference>
<reference key="5">
    <citation type="submission" date="2002-03" db="EMBL/GenBank/DDBJ databases">
        <title>Full-length cDNA from Arabidopsis thaliana.</title>
        <authorList>
            <person name="Brover V.V."/>
            <person name="Troukhan M.E."/>
            <person name="Alexandrov N.A."/>
            <person name="Lu Y.-P."/>
            <person name="Flavell R.B."/>
            <person name="Feldmann K.A."/>
        </authorList>
    </citation>
    <scope>NUCLEOTIDE SEQUENCE [LARGE SCALE MRNA] (ISOFORM 1)</scope>
</reference>
<reference key="6">
    <citation type="journal article" date="2002" name="Science">
        <title>Functional annotation of a full-length Arabidopsis cDNA collection.</title>
        <authorList>
            <person name="Seki M."/>
            <person name="Narusaka M."/>
            <person name="Kamiya A."/>
            <person name="Ishida J."/>
            <person name="Satou M."/>
            <person name="Sakurai T."/>
            <person name="Nakajima M."/>
            <person name="Enju A."/>
            <person name="Akiyama K."/>
            <person name="Oono Y."/>
            <person name="Muramatsu M."/>
            <person name="Hayashizaki Y."/>
            <person name="Kawai J."/>
            <person name="Carninci P."/>
            <person name="Itoh M."/>
            <person name="Ishii Y."/>
            <person name="Arakawa T."/>
            <person name="Shibata K."/>
            <person name="Shinagawa A."/>
            <person name="Shinozaki K."/>
        </authorList>
    </citation>
    <scope>NUCLEOTIDE SEQUENCE [LARGE SCALE MRNA] OF 161-297</scope>
    <source>
        <strain>cv. Columbia</strain>
    </source>
</reference>
<reference key="7">
    <citation type="journal article" date="2004" name="J. Exp. Bot.">
        <title>Characterization of Arabidopsis ZIM, a member of a novel plant-specific GATA factor gene family.</title>
        <authorList>
            <person name="Shikata M."/>
            <person name="Matsuda Y."/>
            <person name="Ando K."/>
            <person name="Nishii A."/>
            <person name="Takemura M."/>
            <person name="Yokota A."/>
            <person name="Kohchi T."/>
        </authorList>
    </citation>
    <scope>FUNCTION</scope>
    <scope>TISSUE SPECIFICITY</scope>
</reference>
<reference key="8">
    <citation type="journal article" date="2004" name="Plant Physiol.">
        <title>The GATA family of transcription factors in Arabidopsis and rice.</title>
        <authorList>
            <person name="Reyes J.C."/>
            <person name="Muro-Pastor M.I."/>
            <person name="Florencio F.J."/>
        </authorList>
    </citation>
    <scope>GENE FAMILY ORGANIZATION</scope>
</reference>
<reference key="9">
    <citation type="journal article" date="2007" name="Trends Plant Sci.">
        <title>The tify family previously known as ZIM.</title>
        <authorList>
            <person name="Vanholme B."/>
            <person name="Grunewald W."/>
            <person name="Bateman A."/>
            <person name="Kohchi T."/>
            <person name="Gheysen G."/>
        </authorList>
    </citation>
    <scope>GENE FAMILY</scope>
    <scope>NOMENCLATURE</scope>
</reference>
<name>GAT24_ARATH</name>
<proteinExistence type="evidence at protein level"/>
<dbReference type="EMBL" id="AB119060">
    <property type="protein sequence ID" value="BAD02930.1"/>
    <property type="molecule type" value="mRNA"/>
</dbReference>
<dbReference type="EMBL" id="AB023045">
    <property type="protein sequence ID" value="BAB01708.1"/>
    <property type="molecule type" value="Genomic_DNA"/>
</dbReference>
<dbReference type="EMBL" id="CP002686">
    <property type="protein sequence ID" value="AEE76470.1"/>
    <property type="molecule type" value="Genomic_DNA"/>
</dbReference>
<dbReference type="EMBL" id="CP002686">
    <property type="protein sequence ID" value="AEE76471.1"/>
    <property type="molecule type" value="Genomic_DNA"/>
</dbReference>
<dbReference type="EMBL" id="AY042817">
    <property type="protein sequence ID" value="AAK68757.1"/>
    <property type="molecule type" value="mRNA"/>
</dbReference>
<dbReference type="EMBL" id="AY064628">
    <property type="protein sequence ID" value="AAL47341.1"/>
    <property type="molecule type" value="mRNA"/>
</dbReference>
<dbReference type="EMBL" id="AY085109">
    <property type="protein sequence ID" value="AAM61663.1"/>
    <property type="molecule type" value="mRNA"/>
</dbReference>
<dbReference type="EMBL" id="AK118169">
    <property type="protein sequence ID" value="BAC42792.1"/>
    <property type="molecule type" value="mRNA"/>
</dbReference>
<dbReference type="RefSeq" id="NP_566676.1">
    <molecule id="Q8GXL7-1"/>
    <property type="nucleotide sequence ID" value="NM_113012.4"/>
</dbReference>
<dbReference type="RefSeq" id="NP_850618.1">
    <molecule id="Q8GXL7-2"/>
    <property type="nucleotide sequence ID" value="NM_180287.5"/>
</dbReference>
<dbReference type="SMR" id="Q8GXL7"/>
<dbReference type="BioGRID" id="7002">
    <property type="interactions" value="41"/>
</dbReference>
<dbReference type="FunCoup" id="Q8GXL7">
    <property type="interactions" value="2246"/>
</dbReference>
<dbReference type="IntAct" id="Q8GXL7">
    <property type="interactions" value="35"/>
</dbReference>
<dbReference type="STRING" id="3702.Q8GXL7"/>
<dbReference type="iPTMnet" id="Q8GXL7"/>
<dbReference type="PaxDb" id="3702-AT3G21175.1"/>
<dbReference type="ProteomicsDB" id="228962">
    <molecule id="Q8GXL7-1"/>
</dbReference>
<dbReference type="EnsemblPlants" id="AT3G21175.1">
    <molecule id="Q8GXL7-1"/>
    <property type="protein sequence ID" value="AT3G21175.1"/>
    <property type="gene ID" value="AT3G21175"/>
</dbReference>
<dbReference type="EnsemblPlants" id="AT3G21175.2">
    <molecule id="Q8GXL7-2"/>
    <property type="protein sequence ID" value="AT3G21175.2"/>
    <property type="gene ID" value="AT3G21175"/>
</dbReference>
<dbReference type="GeneID" id="821670"/>
<dbReference type="Gramene" id="AT3G21175.1">
    <molecule id="Q8GXL7-1"/>
    <property type="protein sequence ID" value="AT3G21175.1"/>
    <property type="gene ID" value="AT3G21175"/>
</dbReference>
<dbReference type="Gramene" id="AT3G21175.2">
    <molecule id="Q8GXL7-2"/>
    <property type="protein sequence ID" value="AT3G21175.2"/>
    <property type="gene ID" value="AT3G21175"/>
</dbReference>
<dbReference type="KEGG" id="ath:AT3G21175"/>
<dbReference type="Araport" id="AT3G21175"/>
<dbReference type="TAIR" id="AT3G21175">
    <property type="gene designation" value="ZML1"/>
</dbReference>
<dbReference type="eggNOG" id="KOG1601">
    <property type="taxonomic scope" value="Eukaryota"/>
</dbReference>
<dbReference type="InParanoid" id="Q8GXL7"/>
<dbReference type="OMA" id="MHHHVHY"/>
<dbReference type="PhylomeDB" id="Q8GXL7"/>
<dbReference type="PRO" id="PR:Q8GXL7"/>
<dbReference type="Proteomes" id="UP000006548">
    <property type="component" value="Chromosome 3"/>
</dbReference>
<dbReference type="ExpressionAtlas" id="Q8GXL7">
    <property type="expression patterns" value="baseline and differential"/>
</dbReference>
<dbReference type="GO" id="GO:0005634">
    <property type="term" value="C:nucleus"/>
    <property type="evidence" value="ECO:0007669"/>
    <property type="project" value="UniProtKB-SubCell"/>
</dbReference>
<dbReference type="GO" id="GO:0042802">
    <property type="term" value="F:identical protein binding"/>
    <property type="evidence" value="ECO:0000353"/>
    <property type="project" value="IntAct"/>
</dbReference>
<dbReference type="GO" id="GO:0000976">
    <property type="term" value="F:transcription cis-regulatory region binding"/>
    <property type="evidence" value="ECO:0000353"/>
    <property type="project" value="TAIR"/>
</dbReference>
<dbReference type="GO" id="GO:0008270">
    <property type="term" value="F:zinc ion binding"/>
    <property type="evidence" value="ECO:0007669"/>
    <property type="project" value="UniProtKB-KW"/>
</dbReference>
<dbReference type="GO" id="GO:0006355">
    <property type="term" value="P:regulation of DNA-templated transcription"/>
    <property type="evidence" value="ECO:0007669"/>
    <property type="project" value="InterPro"/>
</dbReference>
<dbReference type="CDD" id="cd00202">
    <property type="entry name" value="ZnF_GATA"/>
    <property type="match status" value="1"/>
</dbReference>
<dbReference type="Gene3D" id="3.30.50.10">
    <property type="entry name" value="Erythroid Transcription Factor GATA-1, subunit A"/>
    <property type="match status" value="1"/>
</dbReference>
<dbReference type="InterPro" id="IPR010402">
    <property type="entry name" value="CCT_domain"/>
</dbReference>
<dbReference type="InterPro" id="IPR045280">
    <property type="entry name" value="TIFY-like"/>
</dbReference>
<dbReference type="InterPro" id="IPR010399">
    <property type="entry name" value="Tify_dom"/>
</dbReference>
<dbReference type="InterPro" id="IPR000679">
    <property type="entry name" value="Znf_GATA"/>
</dbReference>
<dbReference type="InterPro" id="IPR013088">
    <property type="entry name" value="Znf_NHR/GATA"/>
</dbReference>
<dbReference type="PANTHER" id="PTHR46125:SF18">
    <property type="entry name" value="GATA TRANSCRIPTION FACTOR 24"/>
    <property type="match status" value="1"/>
</dbReference>
<dbReference type="PANTHER" id="PTHR46125">
    <property type="entry name" value="GATA TRANSCRIPTION FACTOR 28"/>
    <property type="match status" value="1"/>
</dbReference>
<dbReference type="Pfam" id="PF06203">
    <property type="entry name" value="CCT"/>
    <property type="match status" value="1"/>
</dbReference>
<dbReference type="Pfam" id="PF00320">
    <property type="entry name" value="GATA"/>
    <property type="match status" value="1"/>
</dbReference>
<dbReference type="Pfam" id="PF06200">
    <property type="entry name" value="tify"/>
    <property type="match status" value="1"/>
</dbReference>
<dbReference type="SMART" id="SM00979">
    <property type="entry name" value="TIFY"/>
    <property type="match status" value="1"/>
</dbReference>
<dbReference type="SMART" id="SM00401">
    <property type="entry name" value="ZnF_GATA"/>
    <property type="match status" value="1"/>
</dbReference>
<dbReference type="SUPFAM" id="SSF57716">
    <property type="entry name" value="Glucocorticoid receptor-like (DNA-binding domain)"/>
    <property type="match status" value="1"/>
</dbReference>
<dbReference type="PROSITE" id="PS51017">
    <property type="entry name" value="CCT"/>
    <property type="match status" value="1"/>
</dbReference>
<dbReference type="PROSITE" id="PS00344">
    <property type="entry name" value="GATA_ZN_FINGER_1"/>
    <property type="match status" value="1"/>
</dbReference>
<dbReference type="PROSITE" id="PS50114">
    <property type="entry name" value="GATA_ZN_FINGER_2"/>
    <property type="match status" value="1"/>
</dbReference>
<dbReference type="PROSITE" id="PS51320">
    <property type="entry name" value="TIFY"/>
    <property type="match status" value="1"/>
</dbReference>
<feature type="chain" id="PRO_0000083456" description="GATA transcription factor 24">
    <location>
        <begin position="1"/>
        <end position="297"/>
    </location>
</feature>
<feature type="domain" description="Tify" evidence="4">
    <location>
        <begin position="73"/>
        <end position="108"/>
    </location>
</feature>
<feature type="domain" description="CCT" evidence="3">
    <location>
        <begin position="143"/>
        <end position="185"/>
    </location>
</feature>
<feature type="zinc finger region" description="GATA-type" evidence="2">
    <location>
        <begin position="213"/>
        <end position="269"/>
    </location>
</feature>
<feature type="region of interest" description="Disordered" evidence="5">
    <location>
        <begin position="178"/>
        <end position="203"/>
    </location>
</feature>
<feature type="compositionally biased region" description="Low complexity" evidence="5">
    <location>
        <begin position="190"/>
        <end position="201"/>
    </location>
</feature>
<feature type="splice variant" id="VSP_013742" description="In isoform 2." evidence="7">
    <location>
        <begin position="128"/>
        <end position="129"/>
    </location>
</feature>
<feature type="sequence conflict" description="In Ref. 5; AAM61663." evidence="8" ref="5">
    <original>S</original>
    <variation>G</variation>
    <location>
        <position position="37"/>
    </location>
</feature>
<feature type="sequence conflict" description="In Ref. 5; AAM61663." evidence="8" ref="5">
    <original>L</original>
    <variation>V</variation>
    <location>
        <position position="273"/>
    </location>
</feature>
<feature type="sequence conflict" description="In Ref. 5; AAM61663." evidence="8" ref="5">
    <original>T</original>
    <variation>A</variation>
    <location>
        <position position="296"/>
    </location>
</feature>
<keyword id="KW-0010">Activator</keyword>
<keyword id="KW-0025">Alternative splicing</keyword>
<keyword id="KW-0238">DNA-binding</keyword>
<keyword id="KW-0479">Metal-binding</keyword>
<keyword id="KW-0539">Nucleus</keyword>
<keyword id="KW-1185">Reference proteome</keyword>
<keyword id="KW-0804">Transcription</keyword>
<keyword id="KW-0805">Transcription regulation</keyword>
<keyword id="KW-0862">Zinc</keyword>
<keyword id="KW-0863">Zinc-finger</keyword>
<sequence>MDDLHGRNGRMHIGVAQNPMHVQYEDHGLHHIDNENSMMDDHADGGMDEGVETDIPSHPGNSADNRGEVVDRGIENGDQLTLSFQGQVYVFDRVSPEKVQAVLLLLGGREVPHTLPTTLGSPHQNNRVLGLSGTPQRLSVPQRLASLLRFREKRKGRNFDKTIRYTVRKEVALRMQRKKGQFTSAKSSNDDSGSTGSDWGSNQSWAVEGTETQKPEVLCRHCGTSEKSTPMMRRGPDGPRTLCNACGLMWANKGTLRDLSKVPPPQTPQHLSLNKNEDANLEADQMMEVTGDISNTQ</sequence>
<protein>
    <recommendedName>
        <fullName>GATA transcription factor 24</fullName>
    </recommendedName>
    <alternativeName>
        <fullName>Protein TIFY 2B</fullName>
    </alternativeName>
    <alternativeName>
        <fullName>ZIM-like 1 protein</fullName>
    </alternativeName>
</protein>
<comment type="function">
    <text evidence="1 6">Transcriptional activator that specifically binds 5'-GATA-3' or 5'-GAT-3' motifs within gene promoters.</text>
</comment>
<comment type="interaction">
    <interactant intactId="EBI-4426127">
        <id>Q8GXL7</id>
    </interactant>
    <interactant intactId="EBI-25517233">
        <id>F4JJA3</id>
        <label>At4g09060</label>
    </interactant>
    <organismsDiffer>false</organismsDiffer>
    <experiments>3</experiments>
</comment>
<comment type="interaction">
    <interactant intactId="EBI-4426127">
        <id>Q8GXL7</id>
    </interactant>
    <interactant intactId="EBI-15191793">
        <id>O82617</id>
        <label>BBX23</label>
    </interactant>
    <organismsDiffer>false</organismsDiffer>
    <experiments>3</experiments>
</comment>
<comment type="interaction">
    <interactant intactId="EBI-4426127">
        <id>Q8GXL7</id>
    </interactant>
    <interactant intactId="EBI-602912">
        <id>Q8L5Y6</id>
        <label>CAND1</label>
    </interactant>
    <organismsDiffer>false</organismsDiffer>
    <experiments>3</experiments>
</comment>
<comment type="interaction">
    <interactant intactId="EBI-4426127">
        <id>Q8GXL7</id>
    </interactant>
    <interactant intactId="EBI-4448729">
        <id>Q9ZVC9</id>
        <label>FRS3</label>
    </interactant>
    <organismsDiffer>false</organismsDiffer>
    <experiments>3</experiments>
</comment>
<comment type="interaction">
    <interactant intactId="EBI-4426127">
        <id>Q8GXL7</id>
    </interactant>
    <interactant intactId="EBI-4426127">
        <id>Q8GXL7</id>
        <label>GATA24</label>
    </interactant>
    <organismsDiffer>false</organismsDiffer>
    <experiments>4</experiments>
</comment>
<comment type="interaction">
    <interactant intactId="EBI-4426127">
        <id>Q8GXL7</id>
    </interactant>
    <interactant intactId="EBI-2460434">
        <id>Q9LRH6</id>
        <label>GATA25</label>
    </interactant>
    <organismsDiffer>false</organismsDiffer>
    <experiments>13</experiments>
</comment>
<comment type="interaction">
    <interactant intactId="EBI-4426127">
        <id>Q8GXL7</id>
    </interactant>
    <interactant intactId="EBI-4435064">
        <id>Q8H1G0</id>
        <label>GATA28</label>
    </interactant>
    <organismsDiffer>false</organismsDiffer>
    <experiments>9</experiments>
</comment>
<comment type="interaction">
    <interactant intactId="EBI-4426127">
        <id>Q8GXL7</id>
    </interactant>
    <interactant intactId="EBI-25519488">
        <id>Q9SZU7</id>
        <label>KAI2</label>
    </interactant>
    <organismsDiffer>false</organismsDiffer>
    <experiments>3</experiments>
</comment>
<comment type="interaction">
    <interactant intactId="EBI-4426127">
        <id>Q8GXL7</id>
    </interactant>
    <interactant intactId="EBI-4424076">
        <id>Q9FIR9</id>
        <label>LSU2</label>
    </interactant>
    <organismsDiffer>false</organismsDiffer>
    <experiments>3</experiments>
</comment>
<comment type="interaction">
    <interactant intactId="EBI-4426127">
        <id>Q8GXL7</id>
    </interactant>
    <interactant intactId="EBI-4428411">
        <id>Q8H0V5</id>
        <label>OCP3</label>
    </interactant>
    <organismsDiffer>false</organismsDiffer>
    <experiments>4</experiments>
</comment>
<comment type="interaction">
    <interactant intactId="EBI-4426127">
        <id>Q8GXL7</id>
    </interactant>
    <interactant intactId="EBI-15204858">
        <id>Q9FMC8</id>
        <label>OFP13</label>
    </interactant>
    <organismsDiffer>false</organismsDiffer>
    <experiments>4</experiments>
</comment>
<comment type="interaction">
    <interactant intactId="EBI-4426127">
        <id>Q8GXL7</id>
    </interactant>
    <interactant intactId="EBI-1238472">
        <id>Q9S7H5</id>
        <label>SCL21</label>
    </interactant>
    <organismsDiffer>false</organismsDiffer>
    <experiments>6</experiments>
</comment>
<comment type="interaction">
    <interactant intactId="EBI-4426127">
        <id>Q8GXL7</id>
    </interactant>
    <interactant intactId="EBI-15195723">
        <id>Q9S763</id>
        <label>WRKY45</label>
    </interactant>
    <organismsDiffer>false</organismsDiffer>
    <experiments>6</experiments>
</comment>
<comment type="subcellular location">
    <subcellularLocation>
        <location evidence="8">Nucleus</location>
    </subcellularLocation>
</comment>
<comment type="alternative products">
    <event type="alternative splicing"/>
    <isoform>
        <id>Q8GXL7-1</id>
        <name>1</name>
        <sequence type="displayed"/>
    </isoform>
    <isoform>
        <id>Q8GXL7-2</id>
        <name>2</name>
        <sequence type="described" ref="VSP_013742"/>
    </isoform>
</comment>
<comment type="tissue specificity">
    <text evidence="6">Predominantly expressed in shoot apices, inflorescences and roots.</text>
</comment>
<comment type="miscellaneous">
    <molecule>Isoform 2</molecule>
    <text evidence="8">May be due to a competing donor splice site.</text>
</comment>
<comment type="similarity">
    <text evidence="8">Belongs to the type IV zinc-finger family. Class C subfamily.</text>
</comment>